<organism>
    <name type="scientific">Saccharomyces cerevisiae (strain ATCC 204508 / S288c)</name>
    <name type="common">Baker's yeast</name>
    <dbReference type="NCBI Taxonomy" id="559292"/>
    <lineage>
        <taxon>Eukaryota</taxon>
        <taxon>Fungi</taxon>
        <taxon>Dikarya</taxon>
        <taxon>Ascomycota</taxon>
        <taxon>Saccharomycotina</taxon>
        <taxon>Saccharomycetes</taxon>
        <taxon>Saccharomycetales</taxon>
        <taxon>Saccharomycetaceae</taxon>
        <taxon>Saccharomyces</taxon>
    </lineage>
</organism>
<dbReference type="EMBL" id="U49845">
    <property type="protein sequence ID" value="AAA98666.1"/>
    <property type="molecule type" value="Genomic_DNA"/>
</dbReference>
<dbReference type="EMBL" id="Z38059">
    <property type="protein sequence ID" value="CAA86138.1"/>
    <property type="molecule type" value="Genomic_DNA"/>
</dbReference>
<dbReference type="EMBL" id="AF395906">
    <property type="protein sequence ID" value="AAK83884.1"/>
    <property type="molecule type" value="Genomic_DNA"/>
</dbReference>
<dbReference type="EMBL" id="U07228">
    <property type="protein sequence ID" value="AAA67919.1"/>
    <property type="molecule type" value="Genomic_DNA"/>
</dbReference>
<dbReference type="EMBL" id="BK006942">
    <property type="protein sequence ID" value="DAA08412.1"/>
    <property type="molecule type" value="Genomic_DNA"/>
</dbReference>
<dbReference type="PIR" id="S48394">
    <property type="entry name" value="S48394"/>
</dbReference>
<dbReference type="RefSeq" id="NP_012126.1">
    <property type="nucleotide sequence ID" value="NM_001179488.1"/>
</dbReference>
<dbReference type="SMR" id="P38928"/>
<dbReference type="BioGRID" id="34851">
    <property type="interactions" value="140"/>
</dbReference>
<dbReference type="DIP" id="DIP-8163N"/>
<dbReference type="FunCoup" id="P38928">
    <property type="interactions" value="58"/>
</dbReference>
<dbReference type="IntAct" id="P38928">
    <property type="interactions" value="9"/>
</dbReference>
<dbReference type="MINT" id="P38928"/>
<dbReference type="STRING" id="4932.YIL140W"/>
<dbReference type="GlyCosmos" id="P38928">
    <property type="glycosylation" value="16 sites, No reported glycans"/>
</dbReference>
<dbReference type="GlyGen" id="P38928">
    <property type="glycosylation" value="17 sites"/>
</dbReference>
<dbReference type="iPTMnet" id="P38928"/>
<dbReference type="PaxDb" id="4932-YIL140W"/>
<dbReference type="PeptideAtlas" id="P38928"/>
<dbReference type="EnsemblFungi" id="YIL140W_mRNA">
    <property type="protein sequence ID" value="YIL140W"/>
    <property type="gene ID" value="YIL140W"/>
</dbReference>
<dbReference type="GeneID" id="854666"/>
<dbReference type="KEGG" id="sce:YIL140W"/>
<dbReference type="AGR" id="SGD:S000001402"/>
<dbReference type="SGD" id="S000001402">
    <property type="gene designation" value="AXL2"/>
</dbReference>
<dbReference type="VEuPathDB" id="FungiDB:YIL140W"/>
<dbReference type="eggNOG" id="ENOG502QURR">
    <property type="taxonomic scope" value="Eukaryota"/>
</dbReference>
<dbReference type="HOGENOM" id="CLU_017550_1_0_1"/>
<dbReference type="InParanoid" id="P38928"/>
<dbReference type="OMA" id="ATRGEWF"/>
<dbReference type="OrthoDB" id="41532at2759"/>
<dbReference type="BioCyc" id="YEAST:G3O-31391-MONOMER"/>
<dbReference type="BioGRID-ORCS" id="854666">
    <property type="hits" value="6 hits in 10 CRISPR screens"/>
</dbReference>
<dbReference type="PRO" id="PR:P38928"/>
<dbReference type="Proteomes" id="UP000002311">
    <property type="component" value="Chromosome IX"/>
</dbReference>
<dbReference type="RNAct" id="P38928">
    <property type="molecule type" value="protein"/>
</dbReference>
<dbReference type="GO" id="GO:0032153">
    <property type="term" value="C:cell division site"/>
    <property type="evidence" value="ECO:0000314"/>
    <property type="project" value="SGD"/>
</dbReference>
<dbReference type="GO" id="GO:0005935">
    <property type="term" value="C:cellular bud neck"/>
    <property type="evidence" value="ECO:0000314"/>
    <property type="project" value="SGD"/>
</dbReference>
<dbReference type="GO" id="GO:0000144">
    <property type="term" value="C:cellular bud neck septin ring"/>
    <property type="evidence" value="ECO:0000314"/>
    <property type="project" value="SGD"/>
</dbReference>
<dbReference type="GO" id="GO:0000324">
    <property type="term" value="C:fungal-type vacuole"/>
    <property type="evidence" value="ECO:0007005"/>
    <property type="project" value="SGD"/>
</dbReference>
<dbReference type="GO" id="GO:0000131">
    <property type="term" value="C:incipient cellular bud site"/>
    <property type="evidence" value="ECO:0000314"/>
    <property type="project" value="SGD"/>
</dbReference>
<dbReference type="GO" id="GO:0005886">
    <property type="term" value="C:plasma membrane"/>
    <property type="evidence" value="ECO:0000314"/>
    <property type="project" value="SGD"/>
</dbReference>
<dbReference type="GO" id="GO:0005509">
    <property type="term" value="F:calcium ion binding"/>
    <property type="evidence" value="ECO:0007669"/>
    <property type="project" value="InterPro"/>
</dbReference>
<dbReference type="GO" id="GO:0007120">
    <property type="term" value="P:axial cellular bud site selection"/>
    <property type="evidence" value="ECO:0000315"/>
    <property type="project" value="SGD"/>
</dbReference>
<dbReference type="CDD" id="cd11303">
    <property type="entry name" value="Dystroglycan_repeat"/>
    <property type="match status" value="1"/>
</dbReference>
<dbReference type="FunFam" id="2.60.40.10:FF:002500">
    <property type="entry name" value="AXL2p Integral plasma membrane protein"/>
    <property type="match status" value="1"/>
</dbReference>
<dbReference type="Gene3D" id="2.60.40.10">
    <property type="entry name" value="Immunoglobulins"/>
    <property type="match status" value="3"/>
</dbReference>
<dbReference type="InterPro" id="IPR006644">
    <property type="entry name" value="Cadg"/>
</dbReference>
<dbReference type="InterPro" id="IPR015919">
    <property type="entry name" value="Cadherin-like_sf"/>
</dbReference>
<dbReference type="InterPro" id="IPR013783">
    <property type="entry name" value="Ig-like_fold"/>
</dbReference>
<dbReference type="InterPro" id="IPR051694">
    <property type="entry name" value="Immunoregulatory_rcpt-like"/>
</dbReference>
<dbReference type="PANTHER" id="PTHR15549:SF26">
    <property type="entry name" value="AXIAL BUDDING PATTERN PROTEIN 2-RELATED"/>
    <property type="match status" value="1"/>
</dbReference>
<dbReference type="PANTHER" id="PTHR15549">
    <property type="entry name" value="PAIRED IMMUNOGLOBULIN-LIKE TYPE 2 RECEPTOR"/>
    <property type="match status" value="1"/>
</dbReference>
<dbReference type="Pfam" id="PF05345">
    <property type="entry name" value="He_PIG"/>
    <property type="match status" value="2"/>
</dbReference>
<dbReference type="SMART" id="SM00736">
    <property type="entry name" value="CADG"/>
    <property type="match status" value="4"/>
</dbReference>
<dbReference type="SUPFAM" id="SSF49313">
    <property type="entry name" value="Cadherin-like"/>
    <property type="match status" value="3"/>
</dbReference>
<evidence type="ECO:0000255" key="1"/>
<evidence type="ECO:0000256" key="2">
    <source>
        <dbReference type="SAM" id="MobiDB-lite"/>
    </source>
</evidence>
<evidence type="ECO:0000269" key="3">
    <source>
    </source>
</evidence>
<evidence type="ECO:0000269" key="4">
    <source>
    </source>
</evidence>
<evidence type="ECO:0000269" key="5">
    <source>
    </source>
</evidence>
<evidence type="ECO:0000269" key="6">
    <source>
    </source>
</evidence>
<evidence type="ECO:0000269" key="7">
    <source>
    </source>
</evidence>
<evidence type="ECO:0000269" key="8">
    <source>
    </source>
</evidence>
<evidence type="ECO:0000269" key="9">
    <source>
    </source>
</evidence>
<evidence type="ECO:0000269" key="10">
    <source>
    </source>
</evidence>
<evidence type="ECO:0000269" key="11">
    <source>
    </source>
</evidence>
<evidence type="ECO:0000269" key="12">
    <source>
    </source>
</evidence>
<evidence type="ECO:0000269" key="13">
    <source>
    </source>
</evidence>
<evidence type="ECO:0000269" key="14">
    <source>
    </source>
</evidence>
<evidence type="ECO:0000269" key="15">
    <source>
    </source>
</evidence>
<evidence type="ECO:0000305" key="16"/>
<evidence type="ECO:0007744" key="17">
    <source>
    </source>
</evidence>
<evidence type="ECO:0007744" key="18">
    <source>
    </source>
</evidence>
<sequence length="823" mass="90783">MTQLQISLLLTATISLLHLVVATPYEAYPIGKQYPPVARVNESFTFQISNDTYKSSVDKTAQITYNCFDLPSWLSFDSSSRTFSGEPSSDLLSDANTTLYFNVILEGTDSADSTSLNNTYQFVVTNRPSISLSSDFNLLALLKNYGYTNGKNALKLDPNEVFNVTFDRSMFTNEESIVSYYGRSQLYNAPLPNWLFFDSGELKFTGTAPVINSAIAPETSYSFVIIATDIEGFSAVEVEFELVIGAHQLTTSIQNSLIINVTDTGNVSYDLPLNYVYLDDDPISSDKLGSINLLDAPDWVALDNATISGSVPDELLGKNSNPANFSVSIYDTYGDVIYFNFEVVSTTDLFAISSLPNINATRGEWFSYYFLPSQFTDYVNTNVSLEFTNSSQDHDWVKFQSSNLTLAGEVPKNFDKLSLGLKANQGSQSQELYFNIIGMDSKITHSNHSANATSTRSSHHSTSTSSYTSSTYTAKISSTSAAATSSAPAALPAANKTSSHNKKAVAIACGVAIPLGVILVALICFLIFWRRRRENPDDENLPHAISGPDLNNPANKPNQENATPLNNPFDDDASSYDDTSIARRLAALNTLKLDNHSATESDISSVDEKRDSLSGMNTYNDQFQSQSKEELLAKPPVQPPESPFFDPQNRSSSVYMDSEPAVNKSWRYTGNLSPVSDIVRDSYGSQKTVDTEKLFDLEAPEKEKRTSRDVTMSSLDPWNSNISPSPVRKSVTPSPYNVTKHRNRHLQNIQDSQSGKNGITPTTMSTSSSDDFVPVKDGENFCWVHSMEPDRRPSKKRLVDFSNKSNVNVGQVKDIHGRIPEML</sequence>
<protein>
    <recommendedName>
        <fullName>Axial budding pattern protein 2</fullName>
    </recommendedName>
    <alternativeName>
        <fullName>Bud site selection protein 10</fullName>
    </alternativeName>
    <alternativeName>
        <fullName>Suppressor of RHO3 protein 4</fullName>
    </alternativeName>
</protein>
<feature type="signal peptide" evidence="1">
    <location>
        <begin position="1"/>
        <end position="22"/>
    </location>
</feature>
<feature type="chain" id="PRO_0000020773" description="Axial budding pattern protein 2">
    <location>
        <begin position="23"/>
        <end position="823"/>
    </location>
</feature>
<feature type="topological domain" description="Extracellular" evidence="1">
    <location>
        <begin position="23"/>
        <end position="508"/>
    </location>
</feature>
<feature type="transmembrane region" description="Helical" evidence="1">
    <location>
        <begin position="509"/>
        <end position="529"/>
    </location>
</feature>
<feature type="topological domain" description="Cytoplasmic" evidence="1">
    <location>
        <begin position="530"/>
        <end position="823"/>
    </location>
</feature>
<feature type="region of interest" description="Disordered" evidence="2">
    <location>
        <begin position="447"/>
        <end position="467"/>
    </location>
</feature>
<feature type="region of interest" description="Disordered" evidence="2">
    <location>
        <begin position="539"/>
        <end position="576"/>
    </location>
</feature>
<feature type="region of interest" description="Disordered" evidence="2">
    <location>
        <begin position="596"/>
        <end position="627"/>
    </location>
</feature>
<feature type="region of interest" description="Disordered" evidence="2">
    <location>
        <begin position="700"/>
        <end position="734"/>
    </location>
</feature>
<feature type="region of interest" description="Disordered" evidence="2">
    <location>
        <begin position="751"/>
        <end position="771"/>
    </location>
</feature>
<feature type="compositionally biased region" description="Low complexity" evidence="2">
    <location>
        <begin position="449"/>
        <end position="467"/>
    </location>
</feature>
<feature type="compositionally biased region" description="Polar residues" evidence="2">
    <location>
        <begin position="552"/>
        <end position="566"/>
    </location>
</feature>
<feature type="compositionally biased region" description="Polar residues" evidence="2">
    <location>
        <begin position="614"/>
        <end position="626"/>
    </location>
</feature>
<feature type="compositionally biased region" description="Polar residues" evidence="2">
    <location>
        <begin position="709"/>
        <end position="724"/>
    </location>
</feature>
<feature type="compositionally biased region" description="Low complexity" evidence="2">
    <location>
        <begin position="760"/>
        <end position="769"/>
    </location>
</feature>
<feature type="modified residue" description="Phosphoserine" evidence="18">
    <location>
        <position position="642"/>
    </location>
</feature>
<feature type="modified residue" description="Phosphoserine" evidence="17 18">
    <location>
        <position position="673"/>
    </location>
</feature>
<feature type="modified residue" description="Phosphoserine" evidence="17 18">
    <location>
        <position position="676"/>
    </location>
</feature>
<feature type="glycosylation site" description="N-linked (GlcNAc...) asparagine" evidence="1">
    <location>
        <position position="41"/>
    </location>
</feature>
<feature type="glycosylation site" description="N-linked (GlcNAc...) asparagine" evidence="1">
    <location>
        <position position="50"/>
    </location>
</feature>
<feature type="glycosylation site" description="N-linked (GlcNAc...) asparagine" evidence="1">
    <location>
        <position position="96"/>
    </location>
</feature>
<feature type="glycosylation site" description="N-linked (GlcNAc...) asparagine" evidence="1">
    <location>
        <position position="117"/>
    </location>
</feature>
<feature type="glycosylation site" description="N-linked (GlcNAc...) asparagine" evidence="1">
    <location>
        <position position="163"/>
    </location>
</feature>
<feature type="glycosylation site" description="N-linked (GlcNAc...) asparagine" evidence="1">
    <location>
        <position position="260"/>
    </location>
</feature>
<feature type="glycosylation site" description="N-linked (GlcNAc...) asparagine" evidence="1">
    <location>
        <position position="266"/>
    </location>
</feature>
<feature type="glycosylation site" description="N-linked (GlcNAc...) asparagine" evidence="1">
    <location>
        <position position="304"/>
    </location>
</feature>
<feature type="glycosylation site" description="N-linked (GlcNAc...) asparagine" evidence="1">
    <location>
        <position position="324"/>
    </location>
</feature>
<feature type="glycosylation site" description="N-linked (GlcNAc...) asparagine" evidence="1">
    <location>
        <position position="359"/>
    </location>
</feature>
<feature type="glycosylation site" description="N-linked (GlcNAc...) asparagine" evidence="1">
    <location>
        <position position="382"/>
    </location>
</feature>
<feature type="glycosylation site" description="N-linked (GlcNAc...) asparagine" evidence="1">
    <location>
        <position position="389"/>
    </location>
</feature>
<feature type="glycosylation site" description="N-linked (GlcNAc...) asparagine" evidence="1">
    <location>
        <position position="403"/>
    </location>
</feature>
<feature type="glycosylation site" description="N-linked (GlcNAc...) asparagine" evidence="1">
    <location>
        <position position="447"/>
    </location>
</feature>
<feature type="glycosylation site" description="N-linked (GlcNAc...) asparagine" evidence="1">
    <location>
        <position position="451"/>
    </location>
</feature>
<feature type="glycosylation site" description="N-linked (GlcNAc...) asparagine" evidence="1">
    <location>
        <position position="495"/>
    </location>
</feature>
<reference key="1">
    <citation type="journal article" date="1996" name="Genes Dev.">
        <title>Selection of axial growth sites in yeast requires Axl2p, a novel plasma membrane glycoprotein.</title>
        <authorList>
            <person name="Roemer T."/>
            <person name="Madden K."/>
            <person name="Chang J."/>
            <person name="Snyder M."/>
        </authorList>
    </citation>
    <scope>NUCLEOTIDE SEQUENCE [GENOMIC DNA]</scope>
    <scope>FUNCTION</scope>
    <scope>GLYCOSYLATION</scope>
    <scope>SUBCELLULAR LOCATION</scope>
    <scope>TOPOLOGY</scope>
</reference>
<reference key="2">
    <citation type="journal article" date="1996" name="Curr. Biol.">
        <title>Bud10p directs axial cell polarization in budding yeast and resembles a transmembrane receptor.</title>
        <authorList>
            <person name="Halme A."/>
            <person name="Michelitch M."/>
            <person name="Mitchell E.L."/>
            <person name="Chant J."/>
        </authorList>
    </citation>
    <scope>NUCLEOTIDE SEQUENCE [GENOMIC DNA]</scope>
    <scope>FUNCTION</scope>
    <scope>SUBCELLULAR LOCATION</scope>
</reference>
<reference key="3">
    <citation type="journal article" date="1997" name="Nature">
        <title>The nucleotide sequence of Saccharomyces cerevisiae chromosome IX.</title>
        <authorList>
            <person name="Churcher C.M."/>
            <person name="Bowman S."/>
            <person name="Badcock K."/>
            <person name="Bankier A.T."/>
            <person name="Brown D."/>
            <person name="Chillingworth T."/>
            <person name="Connor R."/>
            <person name="Devlin K."/>
            <person name="Gentles S."/>
            <person name="Hamlin N."/>
            <person name="Harris D.E."/>
            <person name="Horsnell T."/>
            <person name="Hunt S."/>
            <person name="Jagels K."/>
            <person name="Jones M."/>
            <person name="Lye G."/>
            <person name="Moule S."/>
            <person name="Odell C."/>
            <person name="Pearson D."/>
            <person name="Rajandream M.A."/>
            <person name="Rice P."/>
            <person name="Rowley N."/>
            <person name="Skelton J."/>
            <person name="Smith V."/>
            <person name="Walsh S.V."/>
            <person name="Whitehead S."/>
            <person name="Barrell B.G."/>
        </authorList>
    </citation>
    <scope>NUCLEOTIDE SEQUENCE [LARGE SCALE GENOMIC DNA]</scope>
    <source>
        <strain>ATCC 204508 / S288c</strain>
    </source>
</reference>
<reference key="4">
    <citation type="journal article" date="2014" name="G3 (Bethesda)">
        <title>The reference genome sequence of Saccharomyces cerevisiae: Then and now.</title>
        <authorList>
            <person name="Engel S.R."/>
            <person name="Dietrich F.S."/>
            <person name="Fisk D.G."/>
            <person name="Binkley G."/>
            <person name="Balakrishnan R."/>
            <person name="Costanzo M.C."/>
            <person name="Dwight S.S."/>
            <person name="Hitz B.C."/>
            <person name="Karra K."/>
            <person name="Nash R.S."/>
            <person name="Weng S."/>
            <person name="Wong E.D."/>
            <person name="Lloyd P."/>
            <person name="Skrzypek M.S."/>
            <person name="Miyasato S.R."/>
            <person name="Simison M."/>
            <person name="Cherry J.M."/>
        </authorList>
    </citation>
    <scope>GENOME REANNOTATION</scope>
    <source>
        <strain>ATCC 204508 / S288c</strain>
    </source>
</reference>
<reference key="5">
    <citation type="submission" date="2001-06" db="EMBL/GenBank/DDBJ databases">
        <authorList>
            <person name="Mathew P.W."/>
        </authorList>
    </citation>
    <scope>NUCLEOTIDE SEQUENCE [GENOMIC DNA] OF 1-775</scope>
</reference>
<reference key="6">
    <citation type="journal article" date="1994" name="Yeast">
        <title>Cloning and sequence of REV7, a gene whose function is required for DNA damage-induced mutagenesis in Saccharomyces cerevisiae.</title>
        <authorList>
            <person name="Torpey L.E."/>
            <person name="Gibbs P.E.M."/>
            <person name="Nelson J."/>
            <person name="Lawrence C.W."/>
        </authorList>
    </citation>
    <scope>NUCLEOTIDE SEQUENCE [GENOMIC DNA] OF 80-823</scope>
</reference>
<reference key="7">
    <citation type="journal article" date="1992" name="Mol. Cell. Biol.">
        <title>Yeast RHO3 and RHO4 ras superfamily genes are necessary for bud growth, and their defect is suppressed by a high dose of bud formation genes CDC42 and BEM1.</title>
        <authorList>
            <person name="Matsui Y."/>
            <person name="Toh-E A."/>
        </authorList>
    </citation>
    <scope>FUNCTION</scope>
</reference>
<reference key="8">
    <citation type="journal article" date="1998" name="J. Cell Biol.">
        <title>Transport of axl2p depends on erv14p, an ER-vesicle protein related to the Drosophila cornichon gene product.</title>
        <authorList>
            <person name="Powers J."/>
            <person name="Barlowe C."/>
        </authorList>
    </citation>
    <scope>SUBCELLULAR LOCATION</scope>
</reference>
<reference key="9">
    <citation type="journal article" date="1999" name="J. Cell Biol.">
        <title>O-glycosylation of Axl2/Bud10p by Pmt4p is required for its stability, localization, and function in daughter cells.</title>
        <authorList>
            <person name="Sanders S.L."/>
            <person name="Gentzsch M."/>
            <person name="Tanner W."/>
            <person name="Herskowitz I."/>
        </authorList>
    </citation>
    <scope>GLYCOSYLATION BY PMT4</scope>
    <scope>SUBCELLULAR LOCATION</scope>
</reference>
<reference key="10">
    <citation type="journal article" date="2000" name="J. Cell Biol.">
        <title>Cell cycle programs of gene expression control morphogenetic protein localization.</title>
        <authorList>
            <person name="Lord M."/>
            <person name="Yang M.C."/>
            <person name="Mischke M."/>
            <person name="Chant J."/>
        </authorList>
    </citation>
    <scope>INDUCTION</scope>
    <scope>FUNCTION</scope>
    <scope>SUBCELLULAR LOCATION</scope>
</reference>
<reference key="11">
    <citation type="journal article" date="2000" name="Microbiology">
        <title>Mutational and hyperexpression-induced disruption of bipolar budding in yeast.</title>
        <authorList>
            <person name="Freedman T."/>
            <person name="Porter A."/>
            <person name="Haarer B."/>
        </authorList>
    </citation>
    <scope>FUNCTION</scope>
    <scope>SUBCELLULAR LOCATION</scope>
</reference>
<reference key="12">
    <citation type="journal article" date="2001" name="Science">
        <title>A GDP/GTP exchange factor involved in linking a spatial landmark to cell polarity.</title>
        <authorList>
            <person name="Kang P.J."/>
            <person name="Sanson A."/>
            <person name="Lee B."/>
            <person name="Park H.-O."/>
        </authorList>
    </citation>
    <scope>FUNCTION</scope>
    <scope>INTERACTION WITH BUD5</scope>
</reference>
<reference key="13">
    <citation type="journal article" date="2002" name="Mol. Biol. Cell">
        <title>The roles of bud-site-selection proteins during haploid invasive growth in yeast.</title>
        <authorList>
            <person name="Cullen P.J."/>
            <person name="Sprague G.F. Jr."/>
        </authorList>
    </citation>
    <scope>FUNCTION</scope>
    <scope>SUBCELLULAR LOCATION</scope>
</reference>
<reference key="14">
    <citation type="journal article" date="2003" name="Nature">
        <title>Global analysis of protein localization in budding yeast.</title>
        <authorList>
            <person name="Huh W.-K."/>
            <person name="Falvo J.V."/>
            <person name="Gerke L.C."/>
            <person name="Carroll A.S."/>
            <person name="Howson R.W."/>
            <person name="Weissman J.S."/>
            <person name="O'Shea E.K."/>
        </authorList>
    </citation>
    <scope>SUBCELLULAR LOCATION [LARGE SCALE ANALYSIS]</scope>
</reference>
<reference key="15">
    <citation type="journal article" date="2003" name="Nature">
        <title>Global analysis of protein expression in yeast.</title>
        <authorList>
            <person name="Ghaemmaghami S."/>
            <person name="Huh W.-K."/>
            <person name="Bower K."/>
            <person name="Howson R.W."/>
            <person name="Belle A."/>
            <person name="Dephoure N."/>
            <person name="O'Shea E.K."/>
            <person name="Weissman J.S."/>
        </authorList>
    </citation>
    <scope>LEVEL OF PROTEIN EXPRESSION [LARGE SCALE ANALYSIS]</scope>
</reference>
<reference key="16">
    <citation type="journal article" date="2004" name="Yeast">
        <title>Localization of proteins that are coordinately expressed with Cln2 during the cell cycle.</title>
        <authorList>
            <person name="Sundin B.A."/>
            <person name="Chiu C.-H."/>
            <person name="Riffle M."/>
            <person name="Davis T.N."/>
            <person name="Muller E.G.D."/>
        </authorList>
    </citation>
    <scope>SUBCELLULAR LOCATION</scope>
</reference>
<reference key="17">
    <citation type="journal article" date="2007" name="J. Proteome Res.">
        <title>Large-scale phosphorylation analysis of alpha-factor-arrested Saccharomyces cerevisiae.</title>
        <authorList>
            <person name="Li X."/>
            <person name="Gerber S.A."/>
            <person name="Rudner A.D."/>
            <person name="Beausoleil S.A."/>
            <person name="Haas W."/>
            <person name="Villen J."/>
            <person name="Elias J.E."/>
            <person name="Gygi S.P."/>
        </authorList>
    </citation>
    <scope>PHOSPHORYLATION [LARGE SCALE ANALYSIS] AT SER-673 AND SER-676</scope>
    <scope>IDENTIFICATION BY MASS SPECTROMETRY [LARGE SCALE ANALYSIS]</scope>
    <source>
        <strain>ADR376</strain>
    </source>
</reference>
<reference key="18">
    <citation type="journal article" date="2007" name="Mol. Biol. Cell">
        <title>Sequential and distinct roles of the cadherin domain-containing protein Axl2p in cell polarization in yeast cell cycle.</title>
        <authorList>
            <person name="Gao X.D."/>
            <person name="Sperber L.M."/>
            <person name="Kane S.A."/>
            <person name="Tong Z."/>
            <person name="Tong A.H."/>
            <person name="Boone C."/>
            <person name="Bi E."/>
        </authorList>
    </citation>
    <scope>INTERACTION WITH BEM1; BUD3; BUD4; CDC24 AND CDC42</scope>
    <scope>FUNCTION</scope>
    <scope>SUBCELLULAR LOCATION</scope>
</reference>
<reference key="19">
    <citation type="journal article" date="2009" name="Science">
        <title>Global analysis of Cdk1 substrate phosphorylation sites provides insights into evolution.</title>
        <authorList>
            <person name="Holt L.J."/>
            <person name="Tuch B.B."/>
            <person name="Villen J."/>
            <person name="Johnson A.D."/>
            <person name="Gygi S.P."/>
            <person name="Morgan D.O."/>
        </authorList>
    </citation>
    <scope>PHOSPHORYLATION [LARGE SCALE ANALYSIS] AT SER-642; SER-673 AND SER-676</scope>
    <scope>IDENTIFICATION BY MASS SPECTROMETRY [LARGE SCALE ANALYSIS]</scope>
</reference>
<proteinExistence type="evidence at protein level"/>
<gene>
    <name type="primary">AXL2</name>
    <name type="synonym">BUD10</name>
    <name type="synonym">SRO4</name>
    <name type="ordered locus">YIL140W</name>
</gene>
<accession>P38928</accession>
<accession>D6VVE6</accession>
<accession>Q96VY8</accession>
<keyword id="KW-1003">Cell membrane</keyword>
<keyword id="KW-0325">Glycoprotein</keyword>
<keyword id="KW-0472">Membrane</keyword>
<keyword id="KW-0597">Phosphoprotein</keyword>
<keyword id="KW-1185">Reference proteome</keyword>
<keyword id="KW-0732">Signal</keyword>
<keyword id="KW-0812">Transmembrane</keyword>
<keyword id="KW-1133">Transmembrane helix</keyword>
<comment type="function">
    <text evidence="4 5 6 7 8 12 13 14">Required for haploid cells axial budding pattern. Acts as an anchor to help direct new growth components and/or polarity establishment components like the BUD5 GTP/GDP exchange factor to localize at the cortical axial budding site. Regulates septin organization in late G1 independently of its role in polarity-axis determination.</text>
</comment>
<comment type="subunit">
    <text evidence="6 12">Interacts with BEM1, BUD3, BUD4, BUD5, CDC24 and CDC42.</text>
</comment>
<comment type="interaction">
    <interactant intactId="EBI-3397">
        <id>P38928</id>
    </interactant>
    <interactant intactId="EBI-3840">
        <id>P25558</id>
        <label>BUD3</label>
    </interactant>
    <organismsDiffer>false</organismsDiffer>
    <experiments>2</experiments>
</comment>
<comment type="interaction">
    <interactant intactId="EBI-3397">
        <id>P38928</id>
    </interactant>
    <interactant intactId="EBI-3848">
        <id>P47136</id>
        <label>BUD4</label>
    </interactant>
    <organismsDiffer>false</organismsDiffer>
    <experiments>2</experiments>
</comment>
<comment type="interaction">
    <interactant intactId="EBI-3397">
        <id>P38928</id>
    </interactant>
    <interactant intactId="EBI-3853">
        <id>P25300</id>
        <label>BUD5</label>
    </interactant>
    <organismsDiffer>false</organismsDiffer>
    <experiments>2</experiments>
</comment>
<comment type="subcellular location">
    <subcellularLocation>
        <location evidence="3 4 5 7 9 11 12 13 14 15">Cell membrane</location>
        <topology evidence="3 4 5 7 9 11 12 13 14 15">Single-pass type I membrane protein</topology>
    </subcellularLocation>
    <text>In small buds, localizes to incipient bud sites, emerging buds and to the bud periphery. In large buds, localizes as a ring at the bud neck. Requires ERV14 to be efficiently delivered to the cell surface. Recruitment to the bud neck after S/G2 phase of the cell cycle depends on BUD3 and BUD4.</text>
</comment>
<comment type="induction">
    <text evidence="5">Expression shows a peak at the start of the cell cycle just before bud emergence in late G1 phase.</text>
</comment>
<comment type="PTM">
    <text evidence="3 14">O-glycosylated by PMT4 and N-glycosylated. O-glycosylation increases activity in daughter cells by enhancing stability and promoting localization to the plasma membrane. May also be O-glycosylated by PMT1 and PMT2.</text>
</comment>
<comment type="miscellaneous">
    <text evidence="10">Present with 396 molecules/cell in log phase SD medium.</text>
</comment>
<comment type="caution">
    <text evidence="16">Ref.5 refers to this gene as REV7. REV7 is however the adjacent gene.</text>
</comment>
<name>AXL2_YEAST</name>